<accession>A4TNS2</accession>
<gene>
    <name evidence="1" type="primary">gpmA</name>
    <name type="ordered locus">YPDSF_2564</name>
</gene>
<sequence>MAVTKLVLVRHGESQWNNENRFTGWYDVDLSEKGRSEAKAAGKLLKDEGFTFDFAYTSVLKRAIHTLWNILDELDQAWLPTEKTWKLNERHYGALQGLNKSETAEKYGDEQVKQWRRGFAITPPALEKSDERFPGHDPRYAKLTDAELPTTESLALTIERVIPYWNDVIKPRIASGERVIIAAHGNSLRALVKYLDDLGEDEILELNIPTGVPLVYEFDENFKPIKHYYLGNADEIAAKAAAVANQGKAK</sequence>
<feature type="chain" id="PRO_1000064118" description="2,3-bisphosphoglycerate-dependent phosphoglycerate mutase">
    <location>
        <begin position="1"/>
        <end position="250"/>
    </location>
</feature>
<feature type="active site" description="Tele-phosphohistidine intermediate" evidence="1">
    <location>
        <position position="11"/>
    </location>
</feature>
<feature type="active site" description="Proton donor/acceptor" evidence="1">
    <location>
        <position position="89"/>
    </location>
</feature>
<feature type="binding site" evidence="1">
    <location>
        <begin position="10"/>
        <end position="17"/>
    </location>
    <ligand>
        <name>substrate</name>
    </ligand>
</feature>
<feature type="binding site" evidence="1">
    <location>
        <begin position="23"/>
        <end position="24"/>
    </location>
    <ligand>
        <name>substrate</name>
    </ligand>
</feature>
<feature type="binding site" evidence="1">
    <location>
        <position position="62"/>
    </location>
    <ligand>
        <name>substrate</name>
    </ligand>
</feature>
<feature type="binding site" evidence="1">
    <location>
        <begin position="89"/>
        <end position="92"/>
    </location>
    <ligand>
        <name>substrate</name>
    </ligand>
</feature>
<feature type="binding site" evidence="1">
    <location>
        <position position="100"/>
    </location>
    <ligand>
        <name>substrate</name>
    </ligand>
</feature>
<feature type="binding site" evidence="1">
    <location>
        <begin position="116"/>
        <end position="117"/>
    </location>
    <ligand>
        <name>substrate</name>
    </ligand>
</feature>
<feature type="binding site" evidence="1">
    <location>
        <begin position="185"/>
        <end position="186"/>
    </location>
    <ligand>
        <name>substrate</name>
    </ligand>
</feature>
<feature type="site" description="Transition state stabilizer" evidence="1">
    <location>
        <position position="184"/>
    </location>
</feature>
<proteinExistence type="inferred from homology"/>
<protein>
    <recommendedName>
        <fullName evidence="1">2,3-bisphosphoglycerate-dependent phosphoglycerate mutase</fullName>
        <shortName evidence="1">BPG-dependent PGAM</shortName>
        <shortName evidence="1">PGAM</shortName>
        <shortName evidence="1">Phosphoglyceromutase</shortName>
        <shortName evidence="1">dPGM</shortName>
        <ecNumber evidence="1">5.4.2.11</ecNumber>
    </recommendedName>
</protein>
<keyword id="KW-0312">Gluconeogenesis</keyword>
<keyword id="KW-0324">Glycolysis</keyword>
<keyword id="KW-0413">Isomerase</keyword>
<reference key="1">
    <citation type="submission" date="2007-02" db="EMBL/GenBank/DDBJ databases">
        <title>Complete sequence of chromosome of Yersinia pestis Pestoides F.</title>
        <authorList>
            <consortium name="US DOE Joint Genome Institute"/>
            <person name="Copeland A."/>
            <person name="Lucas S."/>
            <person name="Lapidus A."/>
            <person name="Barry K."/>
            <person name="Detter J.C."/>
            <person name="Glavina del Rio T."/>
            <person name="Hammon N."/>
            <person name="Israni S."/>
            <person name="Dalin E."/>
            <person name="Tice H."/>
            <person name="Pitluck S."/>
            <person name="Di Bartolo G."/>
            <person name="Chain P."/>
            <person name="Malfatti S."/>
            <person name="Shin M."/>
            <person name="Vergez L."/>
            <person name="Schmutz J."/>
            <person name="Larimer F."/>
            <person name="Land M."/>
            <person name="Hauser L."/>
            <person name="Worsham P."/>
            <person name="Chu M."/>
            <person name="Bearden S."/>
            <person name="Garcia E."/>
            <person name="Richardson P."/>
        </authorList>
    </citation>
    <scope>NUCLEOTIDE SEQUENCE [LARGE SCALE GENOMIC DNA]</scope>
    <source>
        <strain>Pestoides F</strain>
    </source>
</reference>
<name>GPMA_YERPP</name>
<evidence type="ECO:0000255" key="1">
    <source>
        <dbReference type="HAMAP-Rule" id="MF_01039"/>
    </source>
</evidence>
<comment type="function">
    <text evidence="1">Catalyzes the interconversion of 2-phosphoglycerate and 3-phosphoglycerate.</text>
</comment>
<comment type="catalytic activity">
    <reaction evidence="1">
        <text>(2R)-2-phosphoglycerate = (2R)-3-phosphoglycerate</text>
        <dbReference type="Rhea" id="RHEA:15901"/>
        <dbReference type="ChEBI" id="CHEBI:58272"/>
        <dbReference type="ChEBI" id="CHEBI:58289"/>
        <dbReference type="EC" id="5.4.2.11"/>
    </reaction>
</comment>
<comment type="pathway">
    <text evidence="1">Carbohydrate degradation; glycolysis; pyruvate from D-glyceraldehyde 3-phosphate: step 3/5.</text>
</comment>
<comment type="subunit">
    <text evidence="1">Homodimer.</text>
</comment>
<comment type="similarity">
    <text evidence="1">Belongs to the phosphoglycerate mutase family. BPG-dependent PGAM subfamily.</text>
</comment>
<dbReference type="EC" id="5.4.2.11" evidence="1"/>
<dbReference type="EMBL" id="CP000668">
    <property type="protein sequence ID" value="ABP40934.1"/>
    <property type="molecule type" value="Genomic_DNA"/>
</dbReference>
<dbReference type="RefSeq" id="WP_002210746.1">
    <property type="nucleotide sequence ID" value="NZ_CP009715.1"/>
</dbReference>
<dbReference type="SMR" id="A4TNS2"/>
<dbReference type="GeneID" id="57977273"/>
<dbReference type="KEGG" id="ypp:YPDSF_2564"/>
<dbReference type="PATRIC" id="fig|386656.14.peg.4084"/>
<dbReference type="UniPathway" id="UPA00109">
    <property type="reaction ID" value="UER00186"/>
</dbReference>
<dbReference type="GO" id="GO:0004619">
    <property type="term" value="F:phosphoglycerate mutase activity"/>
    <property type="evidence" value="ECO:0007669"/>
    <property type="project" value="UniProtKB-EC"/>
</dbReference>
<dbReference type="GO" id="GO:0006094">
    <property type="term" value="P:gluconeogenesis"/>
    <property type="evidence" value="ECO:0007669"/>
    <property type="project" value="UniProtKB-UniRule"/>
</dbReference>
<dbReference type="GO" id="GO:0006096">
    <property type="term" value="P:glycolytic process"/>
    <property type="evidence" value="ECO:0007669"/>
    <property type="project" value="UniProtKB-UniRule"/>
</dbReference>
<dbReference type="CDD" id="cd07067">
    <property type="entry name" value="HP_PGM_like"/>
    <property type="match status" value="1"/>
</dbReference>
<dbReference type="FunFam" id="3.40.50.1240:FF:000003">
    <property type="entry name" value="2,3-bisphosphoglycerate-dependent phosphoglycerate mutase"/>
    <property type="match status" value="1"/>
</dbReference>
<dbReference type="Gene3D" id="3.40.50.1240">
    <property type="entry name" value="Phosphoglycerate mutase-like"/>
    <property type="match status" value="1"/>
</dbReference>
<dbReference type="HAMAP" id="MF_01039">
    <property type="entry name" value="PGAM_GpmA"/>
    <property type="match status" value="1"/>
</dbReference>
<dbReference type="InterPro" id="IPR013078">
    <property type="entry name" value="His_Pase_superF_clade-1"/>
</dbReference>
<dbReference type="InterPro" id="IPR029033">
    <property type="entry name" value="His_PPase_superfam"/>
</dbReference>
<dbReference type="InterPro" id="IPR001345">
    <property type="entry name" value="PG/BPGM_mutase_AS"/>
</dbReference>
<dbReference type="InterPro" id="IPR005952">
    <property type="entry name" value="Phosphogly_mut1"/>
</dbReference>
<dbReference type="NCBIfam" id="TIGR01258">
    <property type="entry name" value="pgm_1"/>
    <property type="match status" value="1"/>
</dbReference>
<dbReference type="NCBIfam" id="NF010713">
    <property type="entry name" value="PRK14115.1"/>
    <property type="match status" value="1"/>
</dbReference>
<dbReference type="PANTHER" id="PTHR11931">
    <property type="entry name" value="PHOSPHOGLYCERATE MUTASE"/>
    <property type="match status" value="1"/>
</dbReference>
<dbReference type="Pfam" id="PF00300">
    <property type="entry name" value="His_Phos_1"/>
    <property type="match status" value="1"/>
</dbReference>
<dbReference type="PIRSF" id="PIRSF000709">
    <property type="entry name" value="6PFK_2-Ptase"/>
    <property type="match status" value="1"/>
</dbReference>
<dbReference type="SMART" id="SM00855">
    <property type="entry name" value="PGAM"/>
    <property type="match status" value="1"/>
</dbReference>
<dbReference type="SUPFAM" id="SSF53254">
    <property type="entry name" value="Phosphoglycerate mutase-like"/>
    <property type="match status" value="1"/>
</dbReference>
<dbReference type="PROSITE" id="PS00175">
    <property type="entry name" value="PG_MUTASE"/>
    <property type="match status" value="1"/>
</dbReference>
<organism>
    <name type="scientific">Yersinia pestis (strain Pestoides F)</name>
    <dbReference type="NCBI Taxonomy" id="386656"/>
    <lineage>
        <taxon>Bacteria</taxon>
        <taxon>Pseudomonadati</taxon>
        <taxon>Pseudomonadota</taxon>
        <taxon>Gammaproteobacteria</taxon>
        <taxon>Enterobacterales</taxon>
        <taxon>Yersiniaceae</taxon>
        <taxon>Yersinia</taxon>
    </lineage>
</organism>